<sequence length="274" mass="31349">MYRIIAADLDGTLLSPENKITKYTEKIIKFLIEKGFYFVFASGRHYIDIMKIRDTLNIKVFMITSNGAQVYDLNNVLIFENHLDEEIALKLCKMKYLDADIITQVYRNNQWYINNNKIDNNFCPTLSSLRYKYFCPDVFNFKKVSKVFFTSHNLKKLHTLQKDIISFLGNRVNVHFSVPGCLEVVSGEVSKGYGLKLISNILGISLKECITFGDGMNDQDMLSISGKACIMENADSSLKKNLPYAEVIGSNKNDGVAVFLNKNFIKNNKFIKCF</sequence>
<accession>Q8KA73</accession>
<keyword id="KW-0378">Hydrolase</keyword>
<keyword id="KW-0460">Magnesium</keyword>
<keyword id="KW-0479">Metal-binding</keyword>
<reference key="1">
    <citation type="journal article" date="2002" name="Science">
        <title>50 million years of genomic stasis in endosymbiotic bacteria.</title>
        <authorList>
            <person name="Tamas I."/>
            <person name="Klasson L."/>
            <person name="Canbaeck B."/>
            <person name="Naeslund A.K."/>
            <person name="Eriksson A.-S."/>
            <person name="Wernegreen J.J."/>
            <person name="Sandstroem J.P."/>
            <person name="Moran N.A."/>
            <person name="Andersson S.G.E."/>
        </authorList>
    </citation>
    <scope>NUCLEOTIDE SEQUENCE [LARGE SCALE GENOMIC DNA]</scope>
    <source>
        <strain>Sg</strain>
    </source>
</reference>
<proteinExistence type="inferred from homology"/>
<protein>
    <recommendedName>
        <fullName>Putative phosphatase BUsg_029</fullName>
        <ecNumber>3.1.3.-</ecNumber>
    </recommendedName>
</protein>
<feature type="chain" id="PRO_0000054432" description="Putative phosphatase BUsg_029">
    <location>
        <begin position="1"/>
        <end position="274"/>
    </location>
</feature>
<feature type="active site" description="Nucleophile" evidence="1">
    <location>
        <position position="8"/>
    </location>
</feature>
<feature type="binding site" evidence="1">
    <location>
        <position position="8"/>
    </location>
    <ligand>
        <name>Mg(2+)</name>
        <dbReference type="ChEBI" id="CHEBI:18420"/>
    </ligand>
</feature>
<feature type="binding site" evidence="1">
    <location>
        <position position="9"/>
    </location>
    <ligand>
        <name>phosphate</name>
        <dbReference type="ChEBI" id="CHEBI:43474"/>
    </ligand>
</feature>
<feature type="binding site" evidence="1">
    <location>
        <position position="10"/>
    </location>
    <ligand>
        <name>Mg(2+)</name>
        <dbReference type="ChEBI" id="CHEBI:18420"/>
    </ligand>
</feature>
<feature type="binding site" evidence="1">
    <location>
        <begin position="42"/>
        <end position="43"/>
    </location>
    <ligand>
        <name>phosphate</name>
        <dbReference type="ChEBI" id="CHEBI:43474"/>
    </ligand>
</feature>
<feature type="binding site" evidence="1">
    <location>
        <position position="191"/>
    </location>
    <ligand>
        <name>phosphate</name>
        <dbReference type="ChEBI" id="CHEBI:43474"/>
    </ligand>
</feature>
<feature type="binding site" evidence="1">
    <location>
        <position position="214"/>
    </location>
    <ligand>
        <name>Mg(2+)</name>
        <dbReference type="ChEBI" id="CHEBI:18420"/>
    </ligand>
</feature>
<feature type="binding site" evidence="1">
    <location>
        <position position="217"/>
    </location>
    <ligand>
        <name>phosphate</name>
        <dbReference type="ChEBI" id="CHEBI:43474"/>
    </ligand>
</feature>
<evidence type="ECO:0000250" key="1"/>
<evidence type="ECO:0000305" key="2"/>
<comment type="cofactor">
    <cofactor evidence="1">
        <name>Mg(2+)</name>
        <dbReference type="ChEBI" id="CHEBI:18420"/>
    </cofactor>
</comment>
<comment type="similarity">
    <text evidence="2">Belongs to the HAD-like hydrolase superfamily. Cof family.</text>
</comment>
<gene>
    <name type="ordered locus">BUsg_029</name>
</gene>
<dbReference type="EC" id="3.1.3.-"/>
<dbReference type="EMBL" id="AE013218">
    <property type="protein sequence ID" value="AAM67600.1"/>
    <property type="molecule type" value="Genomic_DNA"/>
</dbReference>
<dbReference type="RefSeq" id="WP_011053566.1">
    <property type="nucleotide sequence ID" value="NC_004061.1"/>
</dbReference>
<dbReference type="SMR" id="Q8KA73"/>
<dbReference type="STRING" id="198804.BUsg_029"/>
<dbReference type="GeneID" id="93003492"/>
<dbReference type="KEGG" id="bas:BUsg_029"/>
<dbReference type="eggNOG" id="COG0561">
    <property type="taxonomic scope" value="Bacteria"/>
</dbReference>
<dbReference type="HOGENOM" id="CLU_044146_5_2_6"/>
<dbReference type="Proteomes" id="UP000000416">
    <property type="component" value="Chromosome"/>
</dbReference>
<dbReference type="GO" id="GO:0000287">
    <property type="term" value="F:magnesium ion binding"/>
    <property type="evidence" value="ECO:0007669"/>
    <property type="project" value="UniProtKB-ARBA"/>
</dbReference>
<dbReference type="GO" id="GO:0016791">
    <property type="term" value="F:phosphatase activity"/>
    <property type="evidence" value="ECO:0007669"/>
    <property type="project" value="UniProtKB-ARBA"/>
</dbReference>
<dbReference type="CDD" id="cd07516">
    <property type="entry name" value="HAD_Pase"/>
    <property type="match status" value="1"/>
</dbReference>
<dbReference type="Gene3D" id="3.30.1240.10">
    <property type="match status" value="1"/>
</dbReference>
<dbReference type="Gene3D" id="3.40.50.1000">
    <property type="entry name" value="HAD superfamily/HAD-like"/>
    <property type="match status" value="1"/>
</dbReference>
<dbReference type="InterPro" id="IPR000150">
    <property type="entry name" value="Cof"/>
</dbReference>
<dbReference type="InterPro" id="IPR036412">
    <property type="entry name" value="HAD-like_sf"/>
</dbReference>
<dbReference type="InterPro" id="IPR006379">
    <property type="entry name" value="HAD-SF_hydro_IIB"/>
</dbReference>
<dbReference type="InterPro" id="IPR023214">
    <property type="entry name" value="HAD_sf"/>
</dbReference>
<dbReference type="NCBIfam" id="TIGR00099">
    <property type="entry name" value="Cof-subfamily"/>
    <property type="match status" value="1"/>
</dbReference>
<dbReference type="NCBIfam" id="TIGR01484">
    <property type="entry name" value="HAD-SF-IIB"/>
    <property type="match status" value="1"/>
</dbReference>
<dbReference type="PANTHER" id="PTHR47267">
    <property type="match status" value="1"/>
</dbReference>
<dbReference type="PANTHER" id="PTHR47267:SF4">
    <property type="entry name" value="PYRIDOXAL PHOSPHATE PHOSPHATASE YIGL"/>
    <property type="match status" value="1"/>
</dbReference>
<dbReference type="Pfam" id="PF08282">
    <property type="entry name" value="Hydrolase_3"/>
    <property type="match status" value="1"/>
</dbReference>
<dbReference type="SFLD" id="SFLDG01140">
    <property type="entry name" value="C2.B:_Phosphomannomutase_and_P"/>
    <property type="match status" value="1"/>
</dbReference>
<dbReference type="SFLD" id="SFLDS00003">
    <property type="entry name" value="Haloacid_Dehalogenase"/>
    <property type="match status" value="1"/>
</dbReference>
<dbReference type="SUPFAM" id="SSF56784">
    <property type="entry name" value="HAD-like"/>
    <property type="match status" value="1"/>
</dbReference>
<dbReference type="PROSITE" id="PS01228">
    <property type="entry name" value="COF_1"/>
    <property type="match status" value="1"/>
</dbReference>
<organism>
    <name type="scientific">Buchnera aphidicola subsp. Schizaphis graminum (strain Sg)</name>
    <dbReference type="NCBI Taxonomy" id="198804"/>
    <lineage>
        <taxon>Bacteria</taxon>
        <taxon>Pseudomonadati</taxon>
        <taxon>Pseudomonadota</taxon>
        <taxon>Gammaproteobacteria</taxon>
        <taxon>Enterobacterales</taxon>
        <taxon>Erwiniaceae</taxon>
        <taxon>Buchnera</taxon>
    </lineage>
</organism>
<name>Y029_BUCAP</name>